<evidence type="ECO:0000255" key="1"/>
<evidence type="ECO:0000256" key="2">
    <source>
        <dbReference type="SAM" id="MobiDB-lite"/>
    </source>
</evidence>
<evidence type="ECO:0000269" key="3">
    <source>
    </source>
</evidence>
<evidence type="ECO:0000305" key="4"/>
<accession>Q01133</accession>
<organism>
    <name type="scientific">Calliactis parasitica</name>
    <name type="common">Sea anemone</name>
    <name type="synonym">Actinia parasitica</name>
    <dbReference type="NCBI Taxonomy" id="6114"/>
    <lineage>
        <taxon>Eukaryota</taxon>
        <taxon>Metazoa</taxon>
        <taxon>Cnidaria</taxon>
        <taxon>Anthozoa</taxon>
        <taxon>Hexacorallia</taxon>
        <taxon>Actiniaria</taxon>
        <taxon>Nynantheae</taxon>
        <taxon>Hormathiidae</taxon>
        <taxon>Calliactis</taxon>
    </lineage>
</organism>
<feature type="signal peptide" evidence="1">
    <location>
        <begin position="1"/>
        <end position="26"/>
    </location>
</feature>
<feature type="propeptide" id="PRO_0000009852">
    <location>
        <begin position="27"/>
        <end position="116"/>
    </location>
</feature>
<feature type="peptide" id="PRO_0000009853" description="Antho-RFamide">
    <location>
        <begin position="117"/>
        <end position="120"/>
    </location>
</feature>
<feature type="propeptide" id="PRO_0000009854">
    <location>
        <begin position="122"/>
        <end position="125"/>
    </location>
</feature>
<feature type="peptide" id="PRO_0000009855" description="Antho-RFamide">
    <location>
        <begin position="126"/>
        <end position="129"/>
    </location>
</feature>
<feature type="propeptide" id="PRO_0000009856">
    <location>
        <begin position="131"/>
        <end position="134"/>
    </location>
</feature>
<feature type="peptide" id="PRO_0000009857" description="Antho-RFamide">
    <location>
        <begin position="135"/>
        <end position="138"/>
    </location>
</feature>
<feature type="propeptide" id="PRO_0000009858">
    <location>
        <begin position="140"/>
        <end position="142"/>
    </location>
</feature>
<feature type="peptide" id="PRO_0000009859" description="Antho-RFamide">
    <location>
        <begin position="143"/>
        <end position="146"/>
    </location>
</feature>
<feature type="propeptide" id="PRO_0000009860">
    <location>
        <begin position="148"/>
        <end position="151"/>
    </location>
</feature>
<feature type="peptide" id="PRO_0000009861" description="Antho-RFamide">
    <location>
        <begin position="152"/>
        <end position="155"/>
    </location>
</feature>
<feature type="propeptide" id="PRO_0000009862">
    <location>
        <begin position="157"/>
        <end position="160"/>
    </location>
</feature>
<feature type="peptide" id="PRO_0000009863" description="Antho-RFamide">
    <location>
        <begin position="161"/>
        <end position="164"/>
    </location>
</feature>
<feature type="propeptide" id="PRO_0000009864">
    <location>
        <begin position="166"/>
        <end position="169"/>
    </location>
</feature>
<feature type="peptide" id="PRO_0000009865" description="Antho-RFamide">
    <location>
        <begin position="170"/>
        <end position="173"/>
    </location>
</feature>
<feature type="propeptide" id="PRO_0000009866">
    <location>
        <begin position="175"/>
        <end position="178"/>
    </location>
</feature>
<feature type="peptide" id="PRO_0000009867" description="Antho-RFamide">
    <location>
        <begin position="179"/>
        <end position="182"/>
    </location>
</feature>
<feature type="propeptide" id="PRO_0000009868">
    <location>
        <begin position="184"/>
        <end position="187"/>
    </location>
</feature>
<feature type="peptide" id="PRO_0000009869" description="Antho-RFamide">
    <location>
        <begin position="188"/>
        <end position="191"/>
    </location>
</feature>
<feature type="propeptide" id="PRO_0000009870">
    <location>
        <begin position="193"/>
        <end position="196"/>
    </location>
</feature>
<feature type="peptide" id="PRO_0000009871" description="Antho-RFamide">
    <location>
        <begin position="197"/>
        <end position="200"/>
    </location>
</feature>
<feature type="propeptide" id="PRO_0000009872">
    <location>
        <begin position="202"/>
        <end position="205"/>
    </location>
</feature>
<feature type="peptide" id="PRO_0000009873" description="Antho-RFamide">
    <location>
        <begin position="206"/>
        <end position="209"/>
    </location>
</feature>
<feature type="propeptide" id="PRO_0000009874">
    <location>
        <begin position="211"/>
        <end position="214"/>
    </location>
</feature>
<feature type="peptide" id="PRO_0000009875" description="Antho-RFamide">
    <location>
        <begin position="215"/>
        <end position="218"/>
    </location>
</feature>
<feature type="propeptide" id="PRO_0000009876">
    <location>
        <begin position="220"/>
        <end position="223"/>
    </location>
</feature>
<feature type="peptide" id="PRO_0000009877" description="Antho-RFamide">
    <location>
        <begin position="224"/>
        <end position="227"/>
    </location>
</feature>
<feature type="propeptide" id="PRO_0000009878">
    <location>
        <begin position="229"/>
        <end position="233"/>
    </location>
</feature>
<feature type="peptide" id="PRO_0000009879" description="Antho-RFamide">
    <location>
        <begin position="234"/>
        <end position="237"/>
    </location>
</feature>
<feature type="propeptide" id="PRO_0000009880">
    <location>
        <begin position="239"/>
        <end position="242"/>
    </location>
</feature>
<feature type="peptide" id="PRO_0000009881" description="Antho-RFamide">
    <location>
        <begin position="243"/>
        <end position="246"/>
    </location>
</feature>
<feature type="propeptide" id="PRO_0000009882">
    <location>
        <begin position="248"/>
        <end position="252"/>
    </location>
</feature>
<feature type="peptide" id="PRO_0000009883" description="Antho-RFamide">
    <location>
        <begin position="253"/>
        <end position="256"/>
    </location>
</feature>
<feature type="propeptide" id="PRO_0000009884">
    <location>
        <begin position="258"/>
        <end position="262"/>
    </location>
</feature>
<feature type="peptide" id="PRO_0000009885" description="Antho-RFamide">
    <location>
        <begin position="263"/>
        <end position="266"/>
    </location>
</feature>
<feature type="propeptide" id="PRO_0000009886">
    <location>
        <begin position="268"/>
        <end position="271"/>
    </location>
</feature>
<feature type="peptide" id="PRO_0000009887" description="Antho-RFamide">
    <location>
        <begin position="272"/>
        <end position="275"/>
    </location>
</feature>
<feature type="propeptide" id="PRO_0000009888">
    <location>
        <begin position="277"/>
        <end position="280"/>
    </location>
</feature>
<feature type="peptide" id="PRO_0000009889" description="Antho-RFamide">
    <location>
        <begin position="281"/>
        <end position="284"/>
    </location>
</feature>
<feature type="propeptide" id="PRO_0000009890">
    <location>
        <begin position="286"/>
        <end position="334"/>
    </location>
</feature>
<feature type="region of interest" description="Disordered" evidence="2">
    <location>
        <begin position="115"/>
        <end position="334"/>
    </location>
</feature>
<feature type="compositionally biased region" description="Basic and acidic residues" evidence="2">
    <location>
        <begin position="115"/>
        <end position="289"/>
    </location>
</feature>
<feature type="compositionally biased region" description="Basic and acidic residues" evidence="2">
    <location>
        <begin position="303"/>
        <end position="334"/>
    </location>
</feature>
<feature type="modified residue" description="Phenylalanine amide" evidence="3">
    <location>
        <position position="120"/>
    </location>
</feature>
<feature type="modified residue" description="Phenylalanine amide" evidence="3">
    <location>
        <position position="129"/>
    </location>
</feature>
<feature type="modified residue" description="Phenylalanine amide" evidence="3">
    <location>
        <position position="138"/>
    </location>
</feature>
<feature type="modified residue" description="Phenylalanine amide" evidence="3">
    <location>
        <position position="146"/>
    </location>
</feature>
<feature type="modified residue" description="Phenylalanine amide" evidence="3">
    <location>
        <position position="155"/>
    </location>
</feature>
<feature type="modified residue" description="Phenylalanine amide" evidence="3">
    <location>
        <position position="164"/>
    </location>
</feature>
<feature type="modified residue" description="Phenylalanine amide" evidence="3">
    <location>
        <position position="173"/>
    </location>
</feature>
<feature type="modified residue" description="Phenylalanine amide" evidence="3">
    <location>
        <position position="182"/>
    </location>
</feature>
<feature type="modified residue" description="Phenylalanine amide" evidence="3">
    <location>
        <position position="191"/>
    </location>
</feature>
<feature type="modified residue" description="Phenylalanine amide" evidence="3">
    <location>
        <position position="200"/>
    </location>
</feature>
<feature type="modified residue" description="Phenylalanine amide" evidence="3">
    <location>
        <position position="209"/>
    </location>
</feature>
<feature type="modified residue" description="Phenylalanine amide" evidence="3">
    <location>
        <position position="218"/>
    </location>
</feature>
<feature type="modified residue" description="Phenylalanine amide" evidence="3">
    <location>
        <position position="227"/>
    </location>
</feature>
<feature type="modified residue" description="Phenylalanine amide" evidence="3">
    <location>
        <position position="237"/>
    </location>
</feature>
<feature type="modified residue" description="Phenylalanine amide" evidence="3">
    <location>
        <position position="246"/>
    </location>
</feature>
<feature type="modified residue" description="Phenylalanine amide" evidence="3">
    <location>
        <position position="256"/>
    </location>
</feature>
<feature type="modified residue" description="Phenylalanine amide" evidence="3">
    <location>
        <position position="266"/>
    </location>
</feature>
<feature type="modified residue" description="Phenylalanine amide" evidence="3">
    <location>
        <position position="275"/>
    </location>
</feature>
<feature type="modified residue" description="Phenylalanine amide" evidence="3">
    <location>
        <position position="284"/>
    </location>
</feature>
<comment type="function">
    <text>Not known but it could act as a transmitter at neuromuscular synapses.</text>
</comment>
<comment type="subcellular location">
    <subcellularLocation>
        <location>Secreted</location>
    </subcellularLocation>
</comment>
<comment type="tissue specificity">
    <text>Neurons associated with smooth muscle fibers.</text>
</comment>
<comment type="similarity">
    <text evidence="4">Belongs to the FARP (FMRFamide related peptide) family.</text>
</comment>
<sequence>MLVAMTTASYVTILVTLLFHILTINAKTVTKRAKETNLEDDEPQYWRGRFAKDVVPQFWKGRFSDPQFWKGRFSDPQFWKGRFSSHGNKRRYVPGRYGREFQGRFGREFQGRFGREQGRFGREEDQGRFGREEDQGRFGREEQGRFGREEDQGRFGREEDQGRFGREEDQGRFGREEEQGRFGREEDQGRFGREEEQGRFGREEDQGRFGREEDQGRFGREEEQGRFGKRDEDQGRFGKREDQGRFGKRDEDQGRFGKRDEDQGRFGKREDQGRFGKREDQGRFGRELLAKLNKRTTSIQEDPQTRFRDVQMTRRNVAKKDKIEESNDEEANKS</sequence>
<protein>
    <recommendedName>
        <fullName>Antho-RFamide neuropeptides</fullName>
    </recommendedName>
    <component>
        <recommendedName>
            <fullName>Antho-RFamide</fullName>
        </recommendedName>
    </component>
</protein>
<keyword id="KW-0027">Amidation</keyword>
<keyword id="KW-0527">Neuropeptide</keyword>
<keyword id="KW-0677">Repeat</keyword>
<keyword id="KW-0964">Secreted</keyword>
<keyword id="KW-0732">Signal</keyword>
<reference key="1">
    <citation type="journal article" date="1991" name="Proc. Natl. Acad. Sci. U.S.A.">
        <title>Primary structure of the precursor for the sea anemone neuropeptide Antho-RFamide (&lt;Glu-Gly-Arg-Phe-NH2).</title>
        <authorList>
            <person name="Darmer D."/>
            <person name="Schmutzler C."/>
            <person name="Diekhoff D."/>
            <person name="Grimmelikhuijzen C.J.P."/>
        </authorList>
    </citation>
    <scope>NUCLEOTIDE SEQUENCE [MRNA]</scope>
    <scope>AMIDATION AT PHE-120; PHE-129; PHE-138; PHE-146; PHE-155; PHE-164; PHE-173; PHE-182; PHE-191; PHE-200; PHE-209; PHE-218; PHE-227; PHE-237; PHE-246; PHE-256; PHE-266; PHE-275 AND PHE-284</scope>
</reference>
<dbReference type="EMBL" id="M59166">
    <property type="protein sequence ID" value="AAA27878.1"/>
    <property type="molecule type" value="mRNA"/>
</dbReference>
<dbReference type="PIR" id="A39172">
    <property type="entry name" value="A39172"/>
</dbReference>
<dbReference type="GO" id="GO:0005576">
    <property type="term" value="C:extracellular region"/>
    <property type="evidence" value="ECO:0007669"/>
    <property type="project" value="UniProtKB-SubCell"/>
</dbReference>
<dbReference type="GO" id="GO:0007218">
    <property type="term" value="P:neuropeptide signaling pathway"/>
    <property type="evidence" value="ECO:0007669"/>
    <property type="project" value="UniProtKB-KW"/>
</dbReference>
<dbReference type="InterPro" id="IPR002544">
    <property type="entry name" value="FMRFamid-related_peptide-like"/>
</dbReference>
<dbReference type="Pfam" id="PF01581">
    <property type="entry name" value="FARP"/>
    <property type="match status" value="17"/>
</dbReference>
<name>FMRA_CALPA</name>
<proteinExistence type="evidence at protein level"/>